<reference key="1">
    <citation type="journal article" date="1998" name="Blood">
        <title>EHT, a new member of the MTG8/ETO gene family, maps on 20q11 region and is deleted in acute myeloid leukemias.</title>
        <authorList>
            <person name="Fracchiolla N.S."/>
            <person name="Colombo G."/>
            <person name="Finelli P."/>
            <person name="Maiolo A.T."/>
            <person name="Neri A."/>
        </authorList>
    </citation>
    <scope>NUCLEOTIDE SEQUENCE [MRNA] (ISOFORM 2)</scope>
    <scope>TISSUE SPECIFICITY</scope>
</reference>
<reference key="2">
    <citation type="journal article" date="1998" name="Mol. Cell. Biol.">
        <title>The AML1-MTG8 leukemic fusion protein forms a complex with a novel member of the MTG8(ETO/CDR) family, MTGR1.</title>
        <authorList>
            <person name="Kitabayashi I."/>
            <person name="Ida K."/>
            <person name="Morohoshi F."/>
            <person name="Yokoyama A."/>
            <person name="Mitsuhashi N."/>
            <person name="Shimizu K."/>
            <person name="Nomura N."/>
            <person name="Hayashi Y."/>
            <person name="Ohki M."/>
        </authorList>
    </citation>
    <scope>NUCLEOTIDE SEQUENCE [MRNA] (ISOFORM 1)</scope>
    <scope>TISSUE SPECIFICITY</scope>
    <scope>PHOSPHORYLATION</scope>
    <scope>INTERACTION WITH AML1-MTG8/ETO</scope>
    <source>
        <tissue>Leukemia</tissue>
    </source>
</reference>
<reference key="3">
    <citation type="journal article" date="2000" name="Gene">
        <title>Structure and expression pattern of a human MTG8/ETO family gene, MTGR1.</title>
        <authorList>
            <person name="Morohoshi F."/>
            <person name="Mitani S."/>
            <person name="Mitsuhashi N."/>
            <person name="Kitabayashi I."/>
            <person name="Takahashi E."/>
            <person name="Suzuki M."/>
            <person name="Munakata N."/>
            <person name="Ohki M."/>
        </authorList>
    </citation>
    <scope>NUCLEOTIDE SEQUENCE [GENOMIC DNA]</scope>
    <scope>ALTERNATIVE SPLICING (ISOFORM 2)</scope>
    <scope>TISSUE SPECIFICITY</scope>
    <source>
        <tissue>Leukemia</tissue>
    </source>
</reference>
<reference key="4">
    <citation type="journal article" date="2004" name="Nat. Genet.">
        <title>Complete sequencing and characterization of 21,243 full-length human cDNAs.</title>
        <authorList>
            <person name="Ota T."/>
            <person name="Suzuki Y."/>
            <person name="Nishikawa T."/>
            <person name="Otsuki T."/>
            <person name="Sugiyama T."/>
            <person name="Irie R."/>
            <person name="Wakamatsu A."/>
            <person name="Hayashi K."/>
            <person name="Sato H."/>
            <person name="Nagai K."/>
            <person name="Kimura K."/>
            <person name="Makita H."/>
            <person name="Sekine M."/>
            <person name="Obayashi M."/>
            <person name="Nishi T."/>
            <person name="Shibahara T."/>
            <person name="Tanaka T."/>
            <person name="Ishii S."/>
            <person name="Yamamoto J."/>
            <person name="Saito K."/>
            <person name="Kawai Y."/>
            <person name="Isono Y."/>
            <person name="Nakamura Y."/>
            <person name="Nagahari K."/>
            <person name="Murakami K."/>
            <person name="Yasuda T."/>
            <person name="Iwayanagi T."/>
            <person name="Wagatsuma M."/>
            <person name="Shiratori A."/>
            <person name="Sudo H."/>
            <person name="Hosoiri T."/>
            <person name="Kaku Y."/>
            <person name="Kodaira H."/>
            <person name="Kondo H."/>
            <person name="Sugawara M."/>
            <person name="Takahashi M."/>
            <person name="Kanda K."/>
            <person name="Yokoi T."/>
            <person name="Furuya T."/>
            <person name="Kikkawa E."/>
            <person name="Omura Y."/>
            <person name="Abe K."/>
            <person name="Kamihara K."/>
            <person name="Katsuta N."/>
            <person name="Sato K."/>
            <person name="Tanikawa M."/>
            <person name="Yamazaki M."/>
            <person name="Ninomiya K."/>
            <person name="Ishibashi T."/>
            <person name="Yamashita H."/>
            <person name="Murakawa K."/>
            <person name="Fujimori K."/>
            <person name="Tanai H."/>
            <person name="Kimata M."/>
            <person name="Watanabe M."/>
            <person name="Hiraoka S."/>
            <person name="Chiba Y."/>
            <person name="Ishida S."/>
            <person name="Ono Y."/>
            <person name="Takiguchi S."/>
            <person name="Watanabe S."/>
            <person name="Yosida M."/>
            <person name="Hotuta T."/>
            <person name="Kusano J."/>
            <person name="Kanehori K."/>
            <person name="Takahashi-Fujii A."/>
            <person name="Hara H."/>
            <person name="Tanase T.-O."/>
            <person name="Nomura Y."/>
            <person name="Togiya S."/>
            <person name="Komai F."/>
            <person name="Hara R."/>
            <person name="Takeuchi K."/>
            <person name="Arita M."/>
            <person name="Imose N."/>
            <person name="Musashino K."/>
            <person name="Yuuki H."/>
            <person name="Oshima A."/>
            <person name="Sasaki N."/>
            <person name="Aotsuka S."/>
            <person name="Yoshikawa Y."/>
            <person name="Matsunawa H."/>
            <person name="Ichihara T."/>
            <person name="Shiohata N."/>
            <person name="Sano S."/>
            <person name="Moriya S."/>
            <person name="Momiyama H."/>
            <person name="Satoh N."/>
            <person name="Takami S."/>
            <person name="Terashima Y."/>
            <person name="Suzuki O."/>
            <person name="Nakagawa S."/>
            <person name="Senoh A."/>
            <person name="Mizoguchi H."/>
            <person name="Goto Y."/>
            <person name="Shimizu F."/>
            <person name="Wakebe H."/>
            <person name="Hishigaki H."/>
            <person name="Watanabe T."/>
            <person name="Sugiyama A."/>
            <person name="Takemoto M."/>
            <person name="Kawakami B."/>
            <person name="Yamazaki M."/>
            <person name="Watanabe K."/>
            <person name="Kumagai A."/>
            <person name="Itakura S."/>
            <person name="Fukuzumi Y."/>
            <person name="Fujimori Y."/>
            <person name="Komiyama M."/>
            <person name="Tashiro H."/>
            <person name="Tanigami A."/>
            <person name="Fujiwara T."/>
            <person name="Ono T."/>
            <person name="Yamada K."/>
            <person name="Fujii Y."/>
            <person name="Ozaki K."/>
            <person name="Hirao M."/>
            <person name="Ohmori Y."/>
            <person name="Kawabata A."/>
            <person name="Hikiji T."/>
            <person name="Kobatake N."/>
            <person name="Inagaki H."/>
            <person name="Ikema Y."/>
            <person name="Okamoto S."/>
            <person name="Okitani R."/>
            <person name="Kawakami T."/>
            <person name="Noguchi S."/>
            <person name="Itoh T."/>
            <person name="Shigeta K."/>
            <person name="Senba T."/>
            <person name="Matsumura K."/>
            <person name="Nakajima Y."/>
            <person name="Mizuno T."/>
            <person name="Morinaga M."/>
            <person name="Sasaki M."/>
            <person name="Togashi T."/>
            <person name="Oyama M."/>
            <person name="Hata H."/>
            <person name="Watanabe M."/>
            <person name="Komatsu T."/>
            <person name="Mizushima-Sugano J."/>
            <person name="Satoh T."/>
            <person name="Shirai Y."/>
            <person name="Takahashi Y."/>
            <person name="Nakagawa K."/>
            <person name="Okumura K."/>
            <person name="Nagase T."/>
            <person name="Nomura N."/>
            <person name="Kikuchi H."/>
            <person name="Masuho Y."/>
            <person name="Yamashita R."/>
            <person name="Nakai K."/>
            <person name="Yada T."/>
            <person name="Nakamura Y."/>
            <person name="Ohara O."/>
            <person name="Isogai T."/>
            <person name="Sugano S."/>
        </authorList>
    </citation>
    <scope>NUCLEOTIDE SEQUENCE [LARGE SCALE MRNA] (ISOFORM 1)</scope>
    <scope>NUCLEOTIDE SEQUENCE [LARGE SCALE MRNA] OF 1-532 (ISOFORM 5)</scope>
    <source>
        <tissue>Brain</tissue>
        <tissue>Hippocampus</tissue>
    </source>
</reference>
<reference key="5">
    <citation type="journal article" date="2001" name="Nature">
        <title>The DNA sequence and comparative analysis of human chromosome 20.</title>
        <authorList>
            <person name="Deloukas P."/>
            <person name="Matthews L.H."/>
            <person name="Ashurst J.L."/>
            <person name="Burton J."/>
            <person name="Gilbert J.G.R."/>
            <person name="Jones M."/>
            <person name="Stavrides G."/>
            <person name="Almeida J.P."/>
            <person name="Babbage A.K."/>
            <person name="Bagguley C.L."/>
            <person name="Bailey J."/>
            <person name="Barlow K.F."/>
            <person name="Bates K.N."/>
            <person name="Beard L.M."/>
            <person name="Beare D.M."/>
            <person name="Beasley O.P."/>
            <person name="Bird C.P."/>
            <person name="Blakey S.E."/>
            <person name="Bridgeman A.M."/>
            <person name="Brown A.J."/>
            <person name="Buck D."/>
            <person name="Burrill W.D."/>
            <person name="Butler A.P."/>
            <person name="Carder C."/>
            <person name="Carter N.P."/>
            <person name="Chapman J.C."/>
            <person name="Clamp M."/>
            <person name="Clark G."/>
            <person name="Clark L.N."/>
            <person name="Clark S.Y."/>
            <person name="Clee C.M."/>
            <person name="Clegg S."/>
            <person name="Cobley V.E."/>
            <person name="Collier R.E."/>
            <person name="Connor R.E."/>
            <person name="Corby N.R."/>
            <person name="Coulson A."/>
            <person name="Coville G.J."/>
            <person name="Deadman R."/>
            <person name="Dhami P.D."/>
            <person name="Dunn M."/>
            <person name="Ellington A.G."/>
            <person name="Frankland J.A."/>
            <person name="Fraser A."/>
            <person name="French L."/>
            <person name="Garner P."/>
            <person name="Grafham D.V."/>
            <person name="Griffiths C."/>
            <person name="Griffiths M.N.D."/>
            <person name="Gwilliam R."/>
            <person name="Hall R.E."/>
            <person name="Hammond S."/>
            <person name="Harley J.L."/>
            <person name="Heath P.D."/>
            <person name="Ho S."/>
            <person name="Holden J.L."/>
            <person name="Howden P.J."/>
            <person name="Huckle E."/>
            <person name="Hunt A.R."/>
            <person name="Hunt S.E."/>
            <person name="Jekosch K."/>
            <person name="Johnson C.M."/>
            <person name="Johnson D."/>
            <person name="Kay M.P."/>
            <person name="Kimberley A.M."/>
            <person name="King A."/>
            <person name="Knights A."/>
            <person name="Laird G.K."/>
            <person name="Lawlor S."/>
            <person name="Lehvaeslaiho M.H."/>
            <person name="Leversha M.A."/>
            <person name="Lloyd C."/>
            <person name="Lloyd D.M."/>
            <person name="Lovell J.D."/>
            <person name="Marsh V.L."/>
            <person name="Martin S.L."/>
            <person name="McConnachie L.J."/>
            <person name="McLay K."/>
            <person name="McMurray A.A."/>
            <person name="Milne S.A."/>
            <person name="Mistry D."/>
            <person name="Moore M.J.F."/>
            <person name="Mullikin J.C."/>
            <person name="Nickerson T."/>
            <person name="Oliver K."/>
            <person name="Parker A."/>
            <person name="Patel R."/>
            <person name="Pearce T.A.V."/>
            <person name="Peck A.I."/>
            <person name="Phillimore B.J.C.T."/>
            <person name="Prathalingam S.R."/>
            <person name="Plumb R.W."/>
            <person name="Ramsay H."/>
            <person name="Rice C.M."/>
            <person name="Ross M.T."/>
            <person name="Scott C.E."/>
            <person name="Sehra H.K."/>
            <person name="Shownkeen R."/>
            <person name="Sims S."/>
            <person name="Skuce C.D."/>
            <person name="Smith M.L."/>
            <person name="Soderlund C."/>
            <person name="Steward C.A."/>
            <person name="Sulston J.E."/>
            <person name="Swann R.M."/>
            <person name="Sycamore N."/>
            <person name="Taylor R."/>
            <person name="Tee L."/>
            <person name="Thomas D.W."/>
            <person name="Thorpe A."/>
            <person name="Tracey A."/>
            <person name="Tromans A.C."/>
            <person name="Vaudin M."/>
            <person name="Wall M."/>
            <person name="Wallis J.M."/>
            <person name="Whitehead S.L."/>
            <person name="Whittaker P."/>
            <person name="Willey D.L."/>
            <person name="Williams L."/>
            <person name="Williams S.A."/>
            <person name="Wilming L."/>
            <person name="Wray P.W."/>
            <person name="Hubbard T."/>
            <person name="Durbin R.M."/>
            <person name="Bentley D.R."/>
            <person name="Beck S."/>
            <person name="Rogers J."/>
        </authorList>
    </citation>
    <scope>NUCLEOTIDE SEQUENCE [LARGE SCALE GENOMIC DNA]</scope>
</reference>
<reference key="6">
    <citation type="submission" date="2005-09" db="EMBL/GenBank/DDBJ databases">
        <authorList>
            <person name="Mural R.J."/>
            <person name="Istrail S."/>
            <person name="Sutton G.G."/>
            <person name="Florea L."/>
            <person name="Halpern A.L."/>
            <person name="Mobarry C.M."/>
            <person name="Lippert R."/>
            <person name="Walenz B."/>
            <person name="Shatkay H."/>
            <person name="Dew I."/>
            <person name="Miller J.R."/>
            <person name="Flanigan M.J."/>
            <person name="Edwards N.J."/>
            <person name="Bolanos R."/>
            <person name="Fasulo D."/>
            <person name="Halldorsson B.V."/>
            <person name="Hannenhalli S."/>
            <person name="Turner R."/>
            <person name="Yooseph S."/>
            <person name="Lu F."/>
            <person name="Nusskern D.R."/>
            <person name="Shue B.C."/>
            <person name="Zheng X.H."/>
            <person name="Zhong F."/>
            <person name="Delcher A.L."/>
            <person name="Huson D.H."/>
            <person name="Kravitz S.A."/>
            <person name="Mouchard L."/>
            <person name="Reinert K."/>
            <person name="Remington K.A."/>
            <person name="Clark A.G."/>
            <person name="Waterman M.S."/>
            <person name="Eichler E.E."/>
            <person name="Adams M.D."/>
            <person name="Hunkapiller M.W."/>
            <person name="Myers E.W."/>
            <person name="Venter J.C."/>
        </authorList>
    </citation>
    <scope>NUCLEOTIDE SEQUENCE [LARGE SCALE GENOMIC DNA]</scope>
</reference>
<reference key="7">
    <citation type="journal article" date="2004" name="Genome Res.">
        <title>The status, quality, and expansion of the NIH full-length cDNA project: the Mammalian Gene Collection (MGC).</title>
        <authorList>
            <consortium name="The MGC Project Team"/>
        </authorList>
    </citation>
    <scope>NUCLEOTIDE SEQUENCE [LARGE SCALE MRNA] (ISOFORMS 3 AND 4)</scope>
    <source>
        <tissue>Eye</tissue>
        <tissue>Ovary</tissue>
        <tissue>Prostate</tissue>
    </source>
</reference>
<reference key="8">
    <citation type="journal article" date="1998" name="Genomics">
        <title>CBFA2T1, a gene rearranged in human leukemia, is a member of a multigene family.</title>
        <authorList>
            <person name="Calabi F."/>
            <person name="Cilli V."/>
        </authorList>
    </citation>
    <scope>NUCLEOTIDE SEQUENCE [MRNA] OF 22-604 (ISOFORMS 1/4/5)</scope>
    <scope>ALTERNATIVE SPLICING</scope>
    <scope>TISSUE SPECIFICITY</scope>
    <source>
        <tissue>Fetal brain</tissue>
        <tissue>Retina</tissue>
    </source>
</reference>
<reference key="9">
    <citation type="journal article" date="2002" name="Oncogene">
        <title>The transcriptional corepressor MTG16a contains a novel nucleolar targeting sequence deranged in t(16; 21)-positive myeloid malignancies.</title>
        <authorList>
            <person name="Hoogeveen A.T."/>
            <person name="Rossetti S."/>
            <person name="Stoyanova V."/>
            <person name="Schonkeren J."/>
            <person name="Fenaroli A."/>
            <person name="Schiaffonati L."/>
            <person name="van Unen L."/>
            <person name="Sacchi N."/>
        </authorList>
    </citation>
    <scope>INTERACTION WITH CBFA2T3</scope>
</reference>
<reference key="10">
    <citation type="journal article" date="2003" name="Eur. J. Haematol.">
        <title>Interactions between the leukaemia-associated ETO homologues of nuclear repressor proteins.</title>
        <authorList>
            <person name="Lindberg S.R."/>
            <person name="Olsson A."/>
            <person name="Persson A.M."/>
            <person name="Olsson I."/>
        </authorList>
    </citation>
    <scope>INTERACTION WITH RUNX1T1 AND CBFA2T3</scope>
</reference>
<reference key="11">
    <citation type="journal article" date="2003" name="Gene">
        <title>The ETO (MTG8) gene family.</title>
        <authorList>
            <person name="Davis J.N."/>
            <person name="McGhee L."/>
            <person name="Meyers S."/>
        </authorList>
    </citation>
    <scope>REVIEW</scope>
</reference>
<reference key="12">
    <citation type="journal article" date="2004" name="Genomics">
        <title>The MTG proteins: chromatin repression players with a passion for networking.</title>
        <authorList>
            <person name="Rossetti S."/>
            <person name="Hoogeveen A.T."/>
            <person name="Sacchi N."/>
        </authorList>
    </citation>
    <scope>REVIEW</scope>
</reference>
<reference key="13">
    <citation type="journal article" date="2006" name="Cancer Cell">
        <title>The tetramer structure of the Nervy homology two domain, NHR2, is critical for AML1/ETO's activity.</title>
        <authorList>
            <person name="Liu Y."/>
            <person name="Cheney M.D."/>
            <person name="Gaudet J.J."/>
            <person name="Chruszcz M."/>
            <person name="Lukasik S.M."/>
            <person name="Sugiyama D."/>
            <person name="Lary J."/>
            <person name="Cole J."/>
            <person name="Dauter Z."/>
            <person name="Minor W."/>
            <person name="Speck N.A."/>
            <person name="Bushweller J.H."/>
        </authorList>
    </citation>
    <scope>INTERACTION WITH AML1-MTG8/ETO</scope>
</reference>
<reference key="14">
    <citation type="journal article" date="2009" name="Sci. Signal.">
        <title>Quantitative phosphoproteomic analysis of T cell receptor signaling reveals system-wide modulation of protein-protein interactions.</title>
        <authorList>
            <person name="Mayya V."/>
            <person name="Lundgren D.H."/>
            <person name="Hwang S.-I."/>
            <person name="Rezaul K."/>
            <person name="Wu L."/>
            <person name="Eng J.K."/>
            <person name="Rodionov V."/>
            <person name="Han D.K."/>
        </authorList>
    </citation>
    <scope>IDENTIFICATION BY MASS SPECTROMETRY [LARGE SCALE ANALYSIS]</scope>
    <source>
        <tissue>Leukemic T-cell</tissue>
    </source>
</reference>
<reference key="15">
    <citation type="journal article" date="2010" name="Leukemia">
        <title>CBFA2T2 and C20orf112: two novel fusion partners of RUNX1 in acute myeloid leukemia.</title>
        <authorList>
            <person name="Guastadisegni M.C."/>
            <person name="Lonoce A."/>
            <person name="Impera L."/>
            <person name="Di Terlizzi F."/>
            <person name="Fugazza G."/>
            <person name="Aliano S."/>
            <person name="Grasso R."/>
            <person name="Cluzeau T."/>
            <person name="Raynaud S."/>
            <person name="Rocchi M."/>
            <person name="Storlazzi C.T."/>
        </authorList>
    </citation>
    <scope>CHROMOSOMAL TRANSLOCATION WITH RUNX1</scope>
</reference>
<reference key="16">
    <citation type="journal article" date="2010" name="Sci. Signal.">
        <title>Quantitative phosphoproteomics reveals widespread full phosphorylation site occupancy during mitosis.</title>
        <authorList>
            <person name="Olsen J.V."/>
            <person name="Vermeulen M."/>
            <person name="Santamaria A."/>
            <person name="Kumar C."/>
            <person name="Miller M.L."/>
            <person name="Jensen L.J."/>
            <person name="Gnad F."/>
            <person name="Cox J."/>
            <person name="Jensen T.S."/>
            <person name="Nigg E.A."/>
            <person name="Brunak S."/>
            <person name="Mann M."/>
        </authorList>
    </citation>
    <scope>IDENTIFICATION BY MASS SPECTROMETRY [LARGE SCALE ANALYSIS]</scope>
    <source>
        <tissue>Cervix carcinoma</tissue>
    </source>
</reference>
<reference key="17">
    <citation type="journal article" date="2011" name="Sci. Signal.">
        <title>System-wide temporal characterization of the proteome and phosphoproteome of human embryonic stem cell differentiation.</title>
        <authorList>
            <person name="Rigbolt K.T."/>
            <person name="Prokhorova T.A."/>
            <person name="Akimov V."/>
            <person name="Henningsen J."/>
            <person name="Johansen P.T."/>
            <person name="Kratchmarova I."/>
            <person name="Kassem M."/>
            <person name="Mann M."/>
            <person name="Olsen J.V."/>
            <person name="Blagoev B."/>
        </authorList>
    </citation>
    <scope>IDENTIFICATION BY MASS SPECTROMETRY [LARGE SCALE ANALYSIS]</scope>
</reference>
<reference key="18">
    <citation type="journal article" date="2012" name="PLoS ONE">
        <title>Kaiso directs the transcriptional corepressor MTG16 to the Kaiso binding site in target promoters.</title>
        <authorList>
            <person name="Barrett C.W."/>
            <person name="Smith J.J."/>
            <person name="Lu L.C."/>
            <person name="Markham N."/>
            <person name="Stengel K.R."/>
            <person name="Short S.P."/>
            <person name="Zhang B."/>
            <person name="Hunt A.A."/>
            <person name="Fingleton B.M."/>
            <person name="Carnahan R.H."/>
            <person name="Engel M.E."/>
            <person name="Chen X."/>
            <person name="Beauchamp R.D."/>
            <person name="Wilson K.T."/>
            <person name="Hiebert S.W."/>
            <person name="Reynolds A.B."/>
            <person name="Williams C.S."/>
        </authorList>
    </citation>
    <scope>FUNCTION</scope>
</reference>
<reference key="19">
    <citation type="journal article" date="2013" name="J. Proteome Res.">
        <title>Toward a comprehensive characterization of a human cancer cell phosphoproteome.</title>
        <authorList>
            <person name="Zhou H."/>
            <person name="Di Palma S."/>
            <person name="Preisinger C."/>
            <person name="Peng M."/>
            <person name="Polat A.N."/>
            <person name="Heck A.J."/>
            <person name="Mohammed S."/>
        </authorList>
    </citation>
    <scope>PHOSPHORYLATION [LARGE SCALE ANALYSIS] AT SER-33; SER-264; SER-409 AND SER-577</scope>
    <scope>IDENTIFICATION BY MASS SPECTROMETRY [LARGE SCALE ANALYSIS]</scope>
    <source>
        <tissue>Cervix carcinoma</tissue>
        <tissue>Erythroleukemia</tissue>
    </source>
</reference>
<reference key="20">
    <citation type="journal article" date="2014" name="J. Proteomics">
        <title>An enzyme assisted RP-RPLC approach for in-depth analysis of human liver phosphoproteome.</title>
        <authorList>
            <person name="Bian Y."/>
            <person name="Song C."/>
            <person name="Cheng K."/>
            <person name="Dong M."/>
            <person name="Wang F."/>
            <person name="Huang J."/>
            <person name="Sun D."/>
            <person name="Wang L."/>
            <person name="Ye M."/>
            <person name="Zou H."/>
        </authorList>
    </citation>
    <scope>IDENTIFICATION BY MASS SPECTROMETRY [LARGE SCALE ANALYSIS]</scope>
    <source>
        <tissue>Liver</tissue>
    </source>
</reference>
<reference key="21">
    <citation type="journal article" date="2015" name="Br. J. Haematol.">
        <title>PAX5 alterations in genetically unclassified childhood Precursor B-cell acute lymphoblastic leukaemia.</title>
        <authorList>
            <person name="Stasevich I."/>
            <person name="Inglott S."/>
            <person name="Austin N."/>
            <person name="Chatters S."/>
            <person name="Chalker J."/>
            <person name="Addy D."/>
            <person name="Dryden C."/>
            <person name="Ancliff P."/>
            <person name="Ford A."/>
            <person name="Williams O."/>
            <person name="Kempski H."/>
        </authorList>
    </citation>
    <scope>CHROMOSOMAL TRANSLOCATION WITH PAX5</scope>
</reference>
<reference key="22">
    <citation type="journal article" date="2016" name="Nature">
        <title>Co-repressor CBFA2T2 regulates pluripotency and germline development.</title>
        <authorList>
            <person name="Tu S."/>
            <person name="Narendra V."/>
            <person name="Yamaji M."/>
            <person name="Vidal S.E."/>
            <person name="Rojas L.A."/>
            <person name="Wang X."/>
            <person name="Kim S.Y."/>
            <person name="Garcia B.A."/>
            <person name="Tuschl T."/>
            <person name="Stadtfeld M."/>
            <person name="Reinberg D."/>
        </authorList>
    </citation>
    <scope>FUNCTION</scope>
    <scope>INTERACTION WITH PRDM14</scope>
</reference>
<reference key="23">
    <citation type="journal article" date="2017" name="Nat. Struct. Mol. Biol.">
        <title>Site-specific mapping of the human SUMO proteome reveals co-modification with phosphorylation.</title>
        <authorList>
            <person name="Hendriks I.A."/>
            <person name="Lyon D."/>
            <person name="Young C."/>
            <person name="Jensen L.J."/>
            <person name="Vertegaal A.C."/>
            <person name="Nielsen M.L."/>
        </authorList>
    </citation>
    <scope>SUMOYLATION [LARGE SCALE ANALYSIS] AT LYS-38 AND LYS-449</scope>
    <scope>IDENTIFICATION BY MASS SPECTROMETRY [LARGE SCALE ANALYSIS]</scope>
</reference>
<accession>O43439</accession>
<accession>B2RAE6</accession>
<accession>F8W6D7</accession>
<accession>Q5TGE4</accession>
<accession>Q5TGE5</accession>
<accession>Q5TGE6</accession>
<accession>Q5TGE7</accession>
<accession>Q8IWF3</accession>
<accession>Q96B06</accession>
<accession>Q96L00</accession>
<accession>Q9H436</accession>
<accession>Q9UJP8</accession>
<accession>Q9UJP9</accession>
<accession>Q9UP24</accession>
<sequence>MAKESGISLKEIQVLARQWKVGPEKRVPAMPGSPVEVKIQSRSSPPTMPPLPPINPGGPRPVSFTPTALSNGINHSPPTLNGAPSPPQRFSNGPASSTSSALTNQQLPATCGARQLSKLKRFLTTLQQFGNDISPEIGEKVRTLVLALVNSTVTIEEFHCKLQEATNFPLRPFVIPFLKANLPLLQRELLHCARAAKQTPSQYLAQHEHLLLNTSIASPADSSELLMEVHGNGKRPSPERREENSFDRDTIAPEPPAKRVCTISPAPRHSPALTVPLMNPGGQFHPTPPPLQHYTLEDIATSHLYREPNKMLEHREVRDRHHSLGLNGGYQDELVDHRLTEREWADEWKHLDHALNCIMEMVEKTRRSMAVLRRCQESDREELNYWKRRYNENTELRKTGTELVSRQHSPGSADSLSNDSQREFNSRPGTGYVPVEFWKKTEEAVNKVKIQAMSEVQKAVAEAEQKAFEVIATERARMEQTIADVKRQAAEDAFLVINEQEESTENCWNCGRKASETCSGCNIARYCGSFCQHKDWERHHRLCGQNLHGQSPHGQGRPLLPVGRGSSARSADCSVPSPALDKTSATTSRSSTPASVTAIDTNGL</sequence>
<name>MTG8R_HUMAN</name>
<protein>
    <recommendedName>
        <fullName>Protein CBFA2T2</fullName>
    </recommendedName>
    <alternativeName>
        <fullName>ETO homologous on chromosome 20</fullName>
    </alternativeName>
    <alternativeName>
        <fullName>MTG8-like protein</fullName>
    </alternativeName>
    <alternativeName>
        <fullName>MTG8-related protein 1</fullName>
    </alternativeName>
    <alternativeName>
        <fullName>Myeloid translocation-related protein 1</fullName>
    </alternativeName>
    <alternativeName>
        <fullName>p85</fullName>
    </alternativeName>
</protein>
<dbReference type="EMBL" id="AF039200">
    <property type="protein sequence ID" value="AAC17499.1"/>
    <property type="molecule type" value="mRNA"/>
</dbReference>
<dbReference type="EMBL" id="AF068266">
    <property type="protein sequence ID" value="AAC19378.1"/>
    <property type="status" value="ALT_INIT"/>
    <property type="molecule type" value="mRNA"/>
</dbReference>
<dbReference type="EMBL" id="AF013970">
    <property type="protein sequence ID" value="AAC39841.1"/>
    <property type="molecule type" value="mRNA"/>
</dbReference>
<dbReference type="EMBL" id="AF069747">
    <property type="protein sequence ID" value="AAD02825.1"/>
    <property type="molecule type" value="mRNA"/>
</dbReference>
<dbReference type="EMBL" id="AF076461">
    <property type="protein sequence ID" value="AAD41221.1"/>
    <property type="molecule type" value="Genomic_DNA"/>
</dbReference>
<dbReference type="EMBL" id="AF076452">
    <property type="protein sequence ID" value="AAD41221.1"/>
    <property type="status" value="JOINED"/>
    <property type="molecule type" value="Genomic_DNA"/>
</dbReference>
<dbReference type="EMBL" id="AF076453">
    <property type="protein sequence ID" value="AAD41221.1"/>
    <property type="status" value="JOINED"/>
    <property type="molecule type" value="Genomic_DNA"/>
</dbReference>
<dbReference type="EMBL" id="AF076454">
    <property type="protein sequence ID" value="AAD41221.1"/>
    <property type="status" value="JOINED"/>
    <property type="molecule type" value="Genomic_DNA"/>
</dbReference>
<dbReference type="EMBL" id="AF076455">
    <property type="protein sequence ID" value="AAD41221.1"/>
    <property type="status" value="JOINED"/>
    <property type="molecule type" value="Genomic_DNA"/>
</dbReference>
<dbReference type="EMBL" id="AF076456">
    <property type="protein sequence ID" value="AAD41221.1"/>
    <property type="status" value="JOINED"/>
    <property type="molecule type" value="Genomic_DNA"/>
</dbReference>
<dbReference type="EMBL" id="AF076457">
    <property type="protein sequence ID" value="AAD41221.1"/>
    <property type="status" value="JOINED"/>
    <property type="molecule type" value="Genomic_DNA"/>
</dbReference>
<dbReference type="EMBL" id="AF076458">
    <property type="protein sequence ID" value="AAD41221.1"/>
    <property type="status" value="JOINED"/>
    <property type="molecule type" value="Genomic_DNA"/>
</dbReference>
<dbReference type="EMBL" id="AF076459">
    <property type="protein sequence ID" value="AAD41221.1"/>
    <property type="status" value="JOINED"/>
    <property type="molecule type" value="Genomic_DNA"/>
</dbReference>
<dbReference type="EMBL" id="AF076460">
    <property type="protein sequence ID" value="AAD41221.1"/>
    <property type="status" value="JOINED"/>
    <property type="molecule type" value="Genomic_DNA"/>
</dbReference>
<dbReference type="EMBL" id="AK307887">
    <property type="status" value="NOT_ANNOTATED_CDS"/>
    <property type="molecule type" value="mRNA"/>
</dbReference>
<dbReference type="EMBL" id="AK314159">
    <property type="protein sequence ID" value="BAG36843.1"/>
    <property type="molecule type" value="mRNA"/>
</dbReference>
<dbReference type="EMBL" id="AL034421">
    <property type="status" value="NOT_ANNOTATED_CDS"/>
    <property type="molecule type" value="Genomic_DNA"/>
</dbReference>
<dbReference type="EMBL" id="AL121906">
    <property type="status" value="NOT_ANNOTATED_CDS"/>
    <property type="molecule type" value="Genomic_DNA"/>
</dbReference>
<dbReference type="EMBL" id="AL162505">
    <property type="status" value="NOT_ANNOTATED_CDS"/>
    <property type="molecule type" value="Genomic_DNA"/>
</dbReference>
<dbReference type="EMBL" id="CH471077">
    <property type="protein sequence ID" value="EAW76311.1"/>
    <property type="molecule type" value="Genomic_DNA"/>
</dbReference>
<dbReference type="EMBL" id="BC015066">
    <property type="protein sequence ID" value="AAH15066.1"/>
    <property type="molecule type" value="mRNA"/>
</dbReference>
<dbReference type="EMBL" id="BC016298">
    <property type="protein sequence ID" value="AAH16298.2"/>
    <property type="molecule type" value="mRNA"/>
</dbReference>
<dbReference type="EMBL" id="BC040344">
    <property type="protein sequence ID" value="AAH40344.1"/>
    <property type="molecule type" value="mRNA"/>
</dbReference>
<dbReference type="EMBL" id="AF052210">
    <property type="protein sequence ID" value="AAC64699.1"/>
    <property type="molecule type" value="mRNA"/>
</dbReference>
<dbReference type="CCDS" id="CCDS13221.1">
    <molecule id="O43439-1"/>
</dbReference>
<dbReference type="CCDS" id="CCDS46590.1">
    <molecule id="O43439-5"/>
</dbReference>
<dbReference type="RefSeq" id="NP_001028171.1">
    <molecule id="O43439-5"/>
    <property type="nucleotide sequence ID" value="NM_001032999.3"/>
</dbReference>
<dbReference type="RefSeq" id="NP_001034798.1">
    <molecule id="O43439-2"/>
    <property type="nucleotide sequence ID" value="NM_001039709.2"/>
</dbReference>
<dbReference type="RefSeq" id="NP_005084.1">
    <molecule id="O43439-1"/>
    <property type="nucleotide sequence ID" value="NM_005093.4"/>
</dbReference>
<dbReference type="RefSeq" id="XP_011527403.1">
    <property type="nucleotide sequence ID" value="XM_011529101.2"/>
</dbReference>
<dbReference type="RefSeq" id="XP_011527405.1">
    <property type="nucleotide sequence ID" value="XM_011529103.2"/>
</dbReference>
<dbReference type="RefSeq" id="XP_016883610.1">
    <property type="nucleotide sequence ID" value="XM_017028121.1"/>
</dbReference>
<dbReference type="SMR" id="O43439"/>
<dbReference type="BioGRID" id="114586">
    <property type="interactions" value="44"/>
</dbReference>
<dbReference type="DIP" id="DIP-38274N"/>
<dbReference type="FunCoup" id="O43439">
    <property type="interactions" value="2145"/>
</dbReference>
<dbReference type="IntAct" id="O43439">
    <property type="interactions" value="42"/>
</dbReference>
<dbReference type="MINT" id="O43439"/>
<dbReference type="STRING" id="9606.ENSP00000262653"/>
<dbReference type="GlyGen" id="O43439">
    <property type="glycosylation" value="1 site"/>
</dbReference>
<dbReference type="iPTMnet" id="O43439"/>
<dbReference type="MetOSite" id="O43439"/>
<dbReference type="PhosphoSitePlus" id="O43439"/>
<dbReference type="BioMuta" id="CBFA2T2"/>
<dbReference type="jPOST" id="O43439"/>
<dbReference type="MassIVE" id="O43439"/>
<dbReference type="PaxDb" id="9606-ENSP00000262653"/>
<dbReference type="PeptideAtlas" id="O43439"/>
<dbReference type="ProteomicsDB" id="29761"/>
<dbReference type="ProteomicsDB" id="48949">
    <molecule id="O43439-1"/>
</dbReference>
<dbReference type="ProteomicsDB" id="48950">
    <molecule id="O43439-2"/>
</dbReference>
<dbReference type="ProteomicsDB" id="48951">
    <molecule id="O43439-3"/>
</dbReference>
<dbReference type="ProteomicsDB" id="48952">
    <molecule id="O43439-4"/>
</dbReference>
<dbReference type="Pumba" id="O43439"/>
<dbReference type="Antibodypedia" id="10684">
    <property type="antibodies" value="297 antibodies from 33 providers"/>
</dbReference>
<dbReference type="DNASU" id="9139"/>
<dbReference type="Ensembl" id="ENST00000342704.11">
    <molecule id="O43439-5"/>
    <property type="protein sequence ID" value="ENSP00000345810.6"/>
    <property type="gene ID" value="ENSG00000078699.22"/>
</dbReference>
<dbReference type="Ensembl" id="ENST00000344201.7">
    <molecule id="O43439-3"/>
    <property type="protein sequence ID" value="ENSP00000341865.3"/>
    <property type="gene ID" value="ENSG00000078699.22"/>
</dbReference>
<dbReference type="Ensembl" id="ENST00000346541.7">
    <molecule id="O43439-1"/>
    <property type="protein sequence ID" value="ENSP00000262653.7"/>
    <property type="gene ID" value="ENSG00000078699.22"/>
</dbReference>
<dbReference type="Ensembl" id="ENST00000359606.3">
    <molecule id="O43439-4"/>
    <property type="protein sequence ID" value="ENSP00000352622.3"/>
    <property type="gene ID" value="ENSG00000078699.22"/>
</dbReference>
<dbReference type="Ensembl" id="ENST00000375279.6">
    <molecule id="O43439-1"/>
    <property type="protein sequence ID" value="ENSP00000364428.2"/>
    <property type="gene ID" value="ENSG00000078699.22"/>
</dbReference>
<dbReference type="Ensembl" id="ENST00000397800.5">
    <molecule id="O43439-2"/>
    <property type="protein sequence ID" value="ENSP00000380902.1"/>
    <property type="gene ID" value="ENSG00000078699.22"/>
</dbReference>
<dbReference type="Ensembl" id="ENST00000492345.5">
    <molecule id="O43439-2"/>
    <property type="protein sequence ID" value="ENSP00000433270.1"/>
    <property type="gene ID" value="ENSG00000078699.22"/>
</dbReference>
<dbReference type="GeneID" id="9139"/>
<dbReference type="KEGG" id="hsa:9139"/>
<dbReference type="MANE-Select" id="ENST00000342704.11">
    <molecule id="O43439-5"/>
    <property type="protein sequence ID" value="ENSP00000345810.6"/>
    <property type="RefSeq nucleotide sequence ID" value="NM_001032999.3"/>
    <property type="RefSeq protein sequence ID" value="NP_001028171.1"/>
</dbReference>
<dbReference type="UCSC" id="uc002wze.2">
    <molecule id="O43439-1"/>
    <property type="organism name" value="human"/>
</dbReference>
<dbReference type="AGR" id="HGNC:1536"/>
<dbReference type="CTD" id="9139"/>
<dbReference type="DisGeNET" id="9139"/>
<dbReference type="GeneCards" id="CBFA2T2"/>
<dbReference type="HGNC" id="HGNC:1536">
    <property type="gene designation" value="CBFA2T2"/>
</dbReference>
<dbReference type="HPA" id="ENSG00000078699">
    <property type="expression patterns" value="Low tissue specificity"/>
</dbReference>
<dbReference type="MIM" id="603672">
    <property type="type" value="gene"/>
</dbReference>
<dbReference type="neXtProt" id="NX_O43439"/>
<dbReference type="OpenTargets" id="ENSG00000078699"/>
<dbReference type="PharmGKB" id="PA26112"/>
<dbReference type="VEuPathDB" id="HostDB:ENSG00000078699"/>
<dbReference type="eggNOG" id="ENOG502QTD6">
    <property type="taxonomic scope" value="Eukaryota"/>
</dbReference>
<dbReference type="GeneTree" id="ENSGT00950000183176"/>
<dbReference type="HOGENOM" id="CLU_092254_0_0_1"/>
<dbReference type="InParanoid" id="O43439"/>
<dbReference type="OMA" id="WKHLDHX"/>
<dbReference type="OrthoDB" id="8872930at2759"/>
<dbReference type="PAN-GO" id="O43439">
    <property type="GO annotations" value="3 GO annotations based on evolutionary models"/>
</dbReference>
<dbReference type="PhylomeDB" id="O43439"/>
<dbReference type="TreeFam" id="TF106303"/>
<dbReference type="PathwayCommons" id="O43439"/>
<dbReference type="Reactome" id="R-HSA-9827857">
    <property type="pathway name" value="Specification of primordial germ cells"/>
</dbReference>
<dbReference type="SignaLink" id="O43439"/>
<dbReference type="BioGRID-ORCS" id="9139">
    <property type="hits" value="17 hits in 1158 CRISPR screens"/>
</dbReference>
<dbReference type="ChiTaRS" id="CBFA2T2">
    <property type="organism name" value="human"/>
</dbReference>
<dbReference type="GeneWiki" id="CBFA2T2"/>
<dbReference type="GenomeRNAi" id="9139"/>
<dbReference type="Pharos" id="O43439">
    <property type="development level" value="Tbio"/>
</dbReference>
<dbReference type="PRO" id="PR:O43439"/>
<dbReference type="Proteomes" id="UP000005640">
    <property type="component" value="Chromosome 20"/>
</dbReference>
<dbReference type="RNAct" id="O43439">
    <property type="molecule type" value="protein"/>
</dbReference>
<dbReference type="Bgee" id="ENSG00000078699">
    <property type="expression patterns" value="Expressed in buccal mucosa cell and 206 other cell types or tissues"/>
</dbReference>
<dbReference type="ExpressionAtlas" id="O43439">
    <property type="expression patterns" value="baseline and differential"/>
</dbReference>
<dbReference type="GO" id="GO:0005654">
    <property type="term" value="C:nucleoplasm"/>
    <property type="evidence" value="ECO:0000304"/>
    <property type="project" value="Reactome"/>
</dbReference>
<dbReference type="GO" id="GO:0005634">
    <property type="term" value="C:nucleus"/>
    <property type="evidence" value="ECO:0000314"/>
    <property type="project" value="UniProtKB"/>
</dbReference>
<dbReference type="GO" id="GO:0003714">
    <property type="term" value="F:transcription corepressor activity"/>
    <property type="evidence" value="ECO:0000314"/>
    <property type="project" value="UniProtKB"/>
</dbReference>
<dbReference type="GO" id="GO:0008270">
    <property type="term" value="F:zinc ion binding"/>
    <property type="evidence" value="ECO:0007669"/>
    <property type="project" value="UniProtKB-KW"/>
</dbReference>
<dbReference type="GO" id="GO:0006351">
    <property type="term" value="P:DNA-templated transcription"/>
    <property type="evidence" value="ECO:0007669"/>
    <property type="project" value="InterPro"/>
</dbReference>
<dbReference type="GO" id="GO:0060575">
    <property type="term" value="P:intestinal epithelial cell differentiation"/>
    <property type="evidence" value="ECO:0007669"/>
    <property type="project" value="Ensembl"/>
</dbReference>
<dbReference type="GO" id="GO:0045892">
    <property type="term" value="P:negative regulation of DNA-templated transcription"/>
    <property type="evidence" value="ECO:0000314"/>
    <property type="project" value="UniProtKB"/>
</dbReference>
<dbReference type="GO" id="GO:0010977">
    <property type="term" value="P:negative regulation of neuron projection development"/>
    <property type="evidence" value="ECO:0000250"/>
    <property type="project" value="UniProtKB"/>
</dbReference>
<dbReference type="GO" id="GO:0045746">
    <property type="term" value="P:negative regulation of Notch signaling pathway"/>
    <property type="evidence" value="ECO:0007669"/>
    <property type="project" value="Ensembl"/>
</dbReference>
<dbReference type="GO" id="GO:0000122">
    <property type="term" value="P:negative regulation of transcription by RNA polymerase II"/>
    <property type="evidence" value="ECO:0007669"/>
    <property type="project" value="Ensembl"/>
</dbReference>
<dbReference type="GO" id="GO:0010976">
    <property type="term" value="P:positive regulation of neuron projection development"/>
    <property type="evidence" value="ECO:0000314"/>
    <property type="project" value="UniProtKB"/>
</dbReference>
<dbReference type="FunFam" id="6.10.140.2220:FF:000001">
    <property type="entry name" value="CBFA2/RUNX1 translocation partner 3"/>
    <property type="match status" value="1"/>
</dbReference>
<dbReference type="FunFam" id="1.20.120.1110:FF:000001">
    <property type="entry name" value="RUNX1 translocation partner 1"/>
    <property type="match status" value="1"/>
</dbReference>
<dbReference type="Gene3D" id="6.10.140.2220">
    <property type="match status" value="1"/>
</dbReference>
<dbReference type="Gene3D" id="6.10.250.230">
    <property type="match status" value="1"/>
</dbReference>
<dbReference type="Gene3D" id="1.20.120.1110">
    <property type="entry name" value="TAFH/NHR1 domain"/>
    <property type="match status" value="1"/>
</dbReference>
<dbReference type="InterPro" id="IPR013289">
    <property type="entry name" value="CBFA2T1/2/3"/>
</dbReference>
<dbReference type="InterPro" id="IPR013291">
    <property type="entry name" value="MTGR1"/>
</dbReference>
<dbReference type="InterPro" id="IPR014896">
    <property type="entry name" value="NHR2"/>
</dbReference>
<dbReference type="InterPro" id="IPR037249">
    <property type="entry name" value="TAFH/NHR1_dom_sf"/>
</dbReference>
<dbReference type="InterPro" id="IPR003894">
    <property type="entry name" value="TAFH_NHR1"/>
</dbReference>
<dbReference type="InterPro" id="IPR002893">
    <property type="entry name" value="Znf_MYND"/>
</dbReference>
<dbReference type="PANTHER" id="PTHR10379">
    <property type="entry name" value="MTG8 ETO EIGHT TWENTY ONE PROTEIN"/>
    <property type="match status" value="1"/>
</dbReference>
<dbReference type="PANTHER" id="PTHR10379:SF13">
    <property type="entry name" value="PROTEIN CBFA2T2"/>
    <property type="match status" value="1"/>
</dbReference>
<dbReference type="Pfam" id="PF08788">
    <property type="entry name" value="NHR2"/>
    <property type="match status" value="1"/>
</dbReference>
<dbReference type="Pfam" id="PF07531">
    <property type="entry name" value="TAFH"/>
    <property type="match status" value="1"/>
</dbReference>
<dbReference type="Pfam" id="PF01753">
    <property type="entry name" value="zf-MYND"/>
    <property type="match status" value="1"/>
</dbReference>
<dbReference type="PRINTS" id="PR01875">
    <property type="entry name" value="ETOFAMILY"/>
</dbReference>
<dbReference type="PRINTS" id="PR01877">
    <property type="entry name" value="MTGR1PROTEIN"/>
</dbReference>
<dbReference type="SMART" id="SM00549">
    <property type="entry name" value="TAFH"/>
    <property type="match status" value="1"/>
</dbReference>
<dbReference type="SUPFAM" id="SSF144232">
    <property type="entry name" value="HIT/MYND zinc finger-like"/>
    <property type="match status" value="1"/>
</dbReference>
<dbReference type="SUPFAM" id="SSF158553">
    <property type="entry name" value="TAFH domain-like"/>
    <property type="match status" value="1"/>
</dbReference>
<dbReference type="PROSITE" id="PS51119">
    <property type="entry name" value="TAFH"/>
    <property type="match status" value="1"/>
</dbReference>
<dbReference type="PROSITE" id="PS01360">
    <property type="entry name" value="ZF_MYND_1"/>
    <property type="match status" value="1"/>
</dbReference>
<dbReference type="PROSITE" id="PS50865">
    <property type="entry name" value="ZF_MYND_2"/>
    <property type="match status" value="1"/>
</dbReference>
<evidence type="ECO:0000250" key="1">
    <source>
        <dbReference type="UniProtKB" id="O70374"/>
    </source>
</evidence>
<evidence type="ECO:0000250" key="2">
    <source>
        <dbReference type="UniProtKB" id="Q06455"/>
    </source>
</evidence>
<evidence type="ECO:0000255" key="3"/>
<evidence type="ECO:0000255" key="4">
    <source>
        <dbReference type="PROSITE-ProRule" id="PRU00134"/>
    </source>
</evidence>
<evidence type="ECO:0000255" key="5">
    <source>
        <dbReference type="PROSITE-ProRule" id="PRU00440"/>
    </source>
</evidence>
<evidence type="ECO:0000256" key="6">
    <source>
        <dbReference type="SAM" id="MobiDB-lite"/>
    </source>
</evidence>
<evidence type="ECO:0000269" key="7">
    <source>
    </source>
</evidence>
<evidence type="ECO:0000269" key="8">
    <source>
    </source>
</evidence>
<evidence type="ECO:0000269" key="9">
    <source>
    </source>
</evidence>
<evidence type="ECO:0000269" key="10">
    <source>
    </source>
</evidence>
<evidence type="ECO:0000269" key="11">
    <source>
    </source>
</evidence>
<evidence type="ECO:0000269" key="12">
    <source>
    </source>
</evidence>
<evidence type="ECO:0000269" key="13">
    <source>
    </source>
</evidence>
<evidence type="ECO:0000269" key="14">
    <source>
    </source>
</evidence>
<evidence type="ECO:0000269" key="15">
    <source>
    </source>
</evidence>
<evidence type="ECO:0000269" key="16">
    <source>
    </source>
</evidence>
<evidence type="ECO:0000269" key="17">
    <source>
    </source>
</evidence>
<evidence type="ECO:0000303" key="18">
    <source>
    </source>
</evidence>
<evidence type="ECO:0000303" key="19">
    <source>
    </source>
</evidence>
<evidence type="ECO:0000303" key="20">
    <source>
    </source>
</evidence>
<evidence type="ECO:0000303" key="21">
    <source>
    </source>
</evidence>
<evidence type="ECO:0000303" key="22">
    <source>
    </source>
</evidence>
<evidence type="ECO:0000305" key="23"/>
<evidence type="ECO:0007744" key="24">
    <source>
    </source>
</evidence>
<evidence type="ECO:0007744" key="25">
    <source>
    </source>
</evidence>
<comment type="function">
    <text evidence="1 12 18 20">Transcriptional corepressor which facilitates transcriptional repression via its association with DNA-binding transcription factors and recruitment of other corepressors and histone-modifying enzymes (PubMed:12559562, PubMed:15203199). Via association with PRDM14 is involved in regulation of embryonic stem cell (ESC) pluripotency (PubMed:27281218). Involved in primordial germ cell (PCG) formation. Stabilizes PRDM14 and OCT4 on chromatin in a homooligomerization-dependent manner (By similarity). Can repress the expression of MMP7 in a ZBTB33-dependent manner (PubMed:23251453). May function as a complex with the chimeric protein RUNX1/AML1-CBFA2T1/MTG8 (AML1-MTG8/ETO fusion protein) which is produced in acute myeloid leukemia with the chromosomal translocation t(8;21). May thus be involved in the repression of AML1-dependent transcription and the induction of G-CSF/CSF3-dependent cell growth. May be a tumor suppressor gene candidate involved in myeloid tumors with the deletion of the 20q11 region. Through heteromerization with CBFA2T3/MTG16 may be involved in regulation of the proliferation and the differentiation of erythroid progenitors by repressing the expression of TAL1 target genes (By similarity). Required for the maintenance of the secretory cell lineage in the small intestine. Can inhibit Notch signaling probably by association with RBPJ and may be involved in GFI1-mediated Paneth cell differentiation (By similarity).</text>
</comment>
<comment type="subunit">
    <text evidence="1 2 8 9 10 14 15 23">Homooligomer. Homotetramerization is mediated by nervy homology region 2 (By similarity). Can interact with RUNX1T1/CBFA2T1 and CBFA2T3/MTG16; heterotetramerization between members of the CBFA2T family is proposed (PubMed:12242670, PubMed:14703694, PubMed:16616331). Forms a heterooligomer with the AML1-MTG8/ETO fusion protein (PubMed:9447981). Interacts with PRDM14 (PubMed:27281218). Interacts with RBPJ, GFI1, TCF4. Interacts with TAL1 and CBFA2T3/MTG16; the heteromer with CBFA2T3/MTG16 may function in repression of TAL1 (By similarity).</text>
</comment>
<comment type="interaction">
    <interactant intactId="EBI-748628">
        <id>O43439</id>
    </interactant>
    <interactant intactId="EBI-724076">
        <id>Q99750</id>
        <label>MDFI</label>
    </interactant>
    <organismsDiffer>false</organismsDiffer>
    <experiments>4</experiments>
</comment>
<comment type="interaction">
    <interactant intactId="EBI-748628">
        <id>O43439</id>
    </interactant>
    <interactant intactId="EBI-2861634">
        <id>Q9P0J1</id>
        <label>PDP1</label>
    </interactant>
    <organismsDiffer>false</organismsDiffer>
    <experiments>3</experiments>
</comment>
<comment type="interaction">
    <interactant intactId="EBI-748628">
        <id>O43439</id>
    </interactant>
    <interactant intactId="EBI-3957793">
        <id>Q9GZV8</id>
        <label>PRDM14</label>
    </interactant>
    <organismsDiffer>false</organismsDiffer>
    <experiments>14</experiments>
</comment>
<comment type="interaction">
    <interactant intactId="EBI-748628">
        <id>O43439</id>
    </interactant>
    <interactant intactId="EBI-356553">
        <id>P17987</id>
        <label>TCP1</label>
    </interactant>
    <organismsDiffer>false</organismsDiffer>
    <experiments>3</experiments>
</comment>
<comment type="interaction">
    <interactant intactId="EBI-11954144">
        <id>O43439-4</id>
    </interactant>
    <interactant intactId="EBI-2949658">
        <id>O95429</id>
        <label>BAG4</label>
    </interactant>
    <organismsDiffer>false</organismsDiffer>
    <experiments>3</experiments>
</comment>
<comment type="interaction">
    <interactant intactId="EBI-11954144">
        <id>O43439-4</id>
    </interactant>
    <interactant intactId="EBI-11123098">
        <id>Q9Y592-2</id>
        <label>CEP83</label>
    </interactant>
    <organismsDiffer>false</organismsDiffer>
    <experiments>3</experiments>
</comment>
<comment type="interaction">
    <interactant intactId="EBI-11954144">
        <id>O43439-4</id>
    </interactant>
    <interactant intactId="EBI-14069005">
        <id>Q9BVG8-5</id>
        <label>KIFC3</label>
    </interactant>
    <organismsDiffer>false</organismsDiffer>
    <experiments>3</experiments>
</comment>
<comment type="interaction">
    <interactant intactId="EBI-11954144">
        <id>O43439-4</id>
    </interactant>
    <interactant intactId="EBI-11953846">
        <id>Q52LG2</id>
        <label>KRTAP13-2</label>
    </interactant>
    <organismsDiffer>false</organismsDiffer>
    <experiments>3</experiments>
</comment>
<comment type="interaction">
    <interactant intactId="EBI-11954144">
        <id>O43439-4</id>
    </interactant>
    <interactant intactId="EBI-1045155">
        <id>P43360</id>
        <label>MAGEA6</label>
    </interactant>
    <organismsDiffer>false</organismsDiffer>
    <experiments>3</experiments>
</comment>
<comment type="interaction">
    <interactant intactId="EBI-11954144">
        <id>O43439-4</id>
    </interactant>
    <interactant intactId="EBI-946080">
        <id>Q9BSU1</id>
        <label>PHAF1</label>
    </interactant>
    <organismsDiffer>false</organismsDiffer>
    <experiments>3</experiments>
</comment>
<comment type="interaction">
    <interactant intactId="EBI-11954144">
        <id>O43439-4</id>
    </interactant>
    <interactant intactId="EBI-3957793">
        <id>Q9GZV8</id>
        <label>PRDM14</label>
    </interactant>
    <organismsDiffer>false</organismsDiffer>
    <experiments>6</experiments>
</comment>
<comment type="interaction">
    <interactant intactId="EBI-11954144">
        <id>O43439-4</id>
    </interactant>
    <interactant intactId="EBI-11320284">
        <id>Q9NQX0</id>
        <label>PRDM6</label>
    </interactant>
    <organismsDiffer>false</organismsDiffer>
    <experiments>3</experiments>
</comment>
<comment type="interaction">
    <interactant intactId="EBI-11954144">
        <id>O43439-4</id>
    </interactant>
    <interactant intactId="EBI-1773646">
        <id>Q9BRV8</id>
        <label>SIKE1</label>
    </interactant>
    <organismsDiffer>false</organismsDiffer>
    <experiments>3</experiments>
</comment>
<comment type="interaction">
    <interactant intactId="EBI-11954144">
        <id>O43439-4</id>
    </interactant>
    <interactant intactId="EBI-741237">
        <id>O60504</id>
        <label>SORBS3</label>
    </interactant>
    <organismsDiffer>false</organismsDiffer>
    <experiments>3</experiments>
</comment>
<comment type="interaction">
    <interactant intactId="EBI-11954144">
        <id>O43439-4</id>
    </interactant>
    <interactant intactId="EBI-13636688">
        <id>P15884-3</id>
        <label>TCF4</label>
    </interactant>
    <organismsDiffer>false</organismsDiffer>
    <experiments>3</experiments>
</comment>
<comment type="interaction">
    <interactant intactId="EBI-11954144">
        <id>O43439-4</id>
    </interactant>
    <interactant intactId="EBI-5458880">
        <id>Q96GY0</id>
        <label>ZC2HC1A</label>
    </interactant>
    <organismsDiffer>false</organismsDiffer>
    <experiments>3</experiments>
</comment>
<comment type="subcellular location">
    <subcellularLocation>
        <location evidence="23">Nucleus</location>
    </subcellularLocation>
</comment>
<comment type="alternative products">
    <event type="alternative splicing"/>
    <isoform>
        <id>O43439-1</id>
        <name>1</name>
        <name>MTGR1b</name>
        <sequence type="displayed"/>
    </isoform>
    <isoform>
        <id>O43439-2</id>
        <name>2</name>
        <name>MTGR1a</name>
        <name>EHT</name>
        <sequence type="described" ref="VSP_008121"/>
    </isoform>
    <isoform>
        <id>O43439-3</id>
        <name>3</name>
        <sequence type="described" ref="VSP_008121 VSP_008123 VSP_008124"/>
    </isoform>
    <isoform>
        <id>O43439-4</id>
        <name>4</name>
        <sequence type="described" ref="VSP_008122"/>
    </isoform>
    <isoform>
        <id>O43439-5</id>
        <name>5</name>
        <sequence type="described" ref="VSP_047410"/>
    </isoform>
</comment>
<comment type="tissue specificity">
    <text evidence="7 15 16 17">Ubiquitously expressed in fetal and adult tissues. Highly expressed in adult brain, heart, lung, kidney, lymph node, appendix, thymus, testis, uterus, small intestine, prostate and thymus.</text>
</comment>
<comment type="domain">
    <text evidence="2">Nervy homology region 2 (NHR2) mediates homo- and possibly heterotypic oligomerization by forming a four-helix bundle tetrameric structure.</text>
</comment>
<comment type="disease">
    <text evidence="13">A chromosomal aberration involving CBFA2T2 is found in childhood precursor B-cell acute lymphoblastic leukemia (pre-B ALL). Translocation t(9;20)(p13;q11) with PAX5.</text>
</comment>
<comment type="disease">
    <text evidence="11">A chromosomal aberration involving CBFA2T2 is found in acute myeloid leukemia. Translocation t(20;21)(q11;q22) with RUNX1/AML1.</text>
</comment>
<comment type="similarity">
    <text evidence="23">Belongs to the CBFA2T family.</text>
</comment>
<comment type="sequence caution" evidence="23">
    <conflict type="erroneous initiation">
        <sequence resource="EMBL-CDS" id="AAC19378"/>
    </conflict>
    <text>Extended N-terminus.</text>
</comment>
<comment type="sequence caution" evidence="23">
    <conflict type="frameshift">
        <sequence resource="EMBL" id="AK307887"/>
    </conflict>
</comment>
<feature type="chain" id="PRO_0000218301" description="Protein CBFA2T2">
    <location>
        <begin position="1"/>
        <end position="604"/>
    </location>
</feature>
<feature type="domain" description="TAFH" evidence="5">
    <location>
        <begin position="113"/>
        <end position="208"/>
    </location>
</feature>
<feature type="zinc finger region" description="MYND-type" evidence="4">
    <location>
        <begin position="507"/>
        <end position="543"/>
    </location>
</feature>
<feature type="region of interest" description="Disordered" evidence="6">
    <location>
        <begin position="25"/>
        <end position="105"/>
    </location>
</feature>
<feature type="region of interest" description="Interaction with PRDM14" evidence="1">
    <location>
        <begin position="107"/>
        <end position="215"/>
    </location>
</feature>
<feature type="region of interest" description="Disordered" evidence="6">
    <location>
        <begin position="229"/>
        <end position="265"/>
    </location>
</feature>
<feature type="region of interest" description="Nervy homology region 2 (NHR2)" evidence="23">
    <location>
        <begin position="331"/>
        <end position="377"/>
    </location>
</feature>
<feature type="region of interest" description="Disordered" evidence="6">
    <location>
        <begin position="397"/>
        <end position="427"/>
    </location>
</feature>
<feature type="region of interest" description="Nervy homology region 3 (NHR3)" evidence="23">
    <location>
        <begin position="435"/>
        <end position="484"/>
    </location>
</feature>
<feature type="region of interest" description="Disordered" evidence="6">
    <location>
        <begin position="547"/>
        <end position="604"/>
    </location>
</feature>
<feature type="coiled-coil region" evidence="3">
    <location>
        <begin position="451"/>
        <end position="491"/>
    </location>
</feature>
<feature type="compositionally biased region" description="Pro residues" evidence="6">
    <location>
        <begin position="46"/>
        <end position="59"/>
    </location>
</feature>
<feature type="compositionally biased region" description="Polar residues" evidence="6">
    <location>
        <begin position="64"/>
        <end position="79"/>
    </location>
</feature>
<feature type="compositionally biased region" description="Polar residues" evidence="6">
    <location>
        <begin position="88"/>
        <end position="105"/>
    </location>
</feature>
<feature type="compositionally biased region" description="Basic and acidic residues" evidence="6">
    <location>
        <begin position="236"/>
        <end position="251"/>
    </location>
</feature>
<feature type="compositionally biased region" description="Polar residues" evidence="6">
    <location>
        <begin position="402"/>
        <end position="419"/>
    </location>
</feature>
<feature type="compositionally biased region" description="Low complexity" evidence="6">
    <location>
        <begin position="583"/>
        <end position="598"/>
    </location>
</feature>
<feature type="binding site" evidence="4">
    <location>
        <position position="507"/>
    </location>
    <ligand>
        <name>Zn(2+)</name>
        <dbReference type="ChEBI" id="CHEBI:29105"/>
        <label>1</label>
    </ligand>
</feature>
<feature type="binding site" evidence="4">
    <location>
        <position position="510"/>
    </location>
    <ligand>
        <name>Zn(2+)</name>
        <dbReference type="ChEBI" id="CHEBI:29105"/>
        <label>1</label>
    </ligand>
</feature>
<feature type="binding site" evidence="4">
    <location>
        <position position="518"/>
    </location>
    <ligand>
        <name>Zn(2+)</name>
        <dbReference type="ChEBI" id="CHEBI:29105"/>
        <label>2</label>
    </ligand>
</feature>
<feature type="binding site" evidence="4">
    <location>
        <position position="521"/>
    </location>
    <ligand>
        <name>Zn(2+)</name>
        <dbReference type="ChEBI" id="CHEBI:29105"/>
        <label>2</label>
    </ligand>
</feature>
<feature type="binding site" evidence="4">
    <location>
        <position position="527"/>
    </location>
    <ligand>
        <name>Zn(2+)</name>
        <dbReference type="ChEBI" id="CHEBI:29105"/>
        <label>1</label>
    </ligand>
</feature>
<feature type="binding site" evidence="4">
    <location>
        <position position="531"/>
    </location>
    <ligand>
        <name>Zn(2+)</name>
        <dbReference type="ChEBI" id="CHEBI:29105"/>
        <label>1</label>
    </ligand>
</feature>
<feature type="binding site" evidence="4">
    <location>
        <position position="539"/>
    </location>
    <ligand>
        <name>Zn(2+)</name>
        <dbReference type="ChEBI" id="CHEBI:29105"/>
        <label>2</label>
    </ligand>
</feature>
<feature type="binding site" evidence="4">
    <location>
        <position position="543"/>
    </location>
    <ligand>
        <name>Zn(2+)</name>
        <dbReference type="ChEBI" id="CHEBI:29105"/>
        <label>2</label>
    </ligand>
</feature>
<feature type="site" description="Breakpoint for translocation to form RUNX1-CBFA2T2 in acute myeloid leukemia" evidence="11">
    <location>
        <begin position="20"/>
        <end position="21"/>
    </location>
</feature>
<feature type="modified residue" description="Phosphoserine" evidence="24">
    <location>
        <position position="33"/>
    </location>
</feature>
<feature type="modified residue" description="Phosphoserine" evidence="24">
    <location>
        <position position="264"/>
    </location>
</feature>
<feature type="modified residue" description="Phosphoserine" evidence="24">
    <location>
        <position position="409"/>
    </location>
</feature>
<feature type="modified residue" description="Phosphoserine" evidence="24">
    <location>
        <position position="577"/>
    </location>
</feature>
<feature type="cross-link" description="Glycyl lysine isopeptide (Lys-Gly) (interchain with G-Cter in SUMO2)" evidence="25">
    <location>
        <position position="38"/>
    </location>
</feature>
<feature type="cross-link" description="Glycyl lysine isopeptide (Lys-Gly) (interchain with G-Cter in SUMO2)" evidence="25">
    <location>
        <position position="449"/>
    </location>
</feature>
<feature type="splice variant" id="VSP_008121" description="In isoform 2 and isoform 3." evidence="21 22">
    <location>
        <begin position="1"/>
        <end position="29"/>
    </location>
</feature>
<feature type="splice variant" id="VSP_047410" description="In isoform 5." evidence="19">
    <original>MAKESGISLKEIQVLARQWKV</original>
    <variation>MVGVPGAAAFQL</variation>
    <location>
        <begin position="1"/>
        <end position="21"/>
    </location>
</feature>
<feature type="splice variant" id="VSP_008122" description="In isoform 4." evidence="21">
    <original>MAKESGISLKEIQVLARQWK</original>
    <variation>MGFHHVGQARLELLTSGDLPALASQRAGIT</variation>
    <location>
        <begin position="1"/>
        <end position="20"/>
    </location>
</feature>
<feature type="splice variant" id="VSP_008123" description="In isoform 3." evidence="21">
    <original>RREENSFDRDTIAPEPPAKRVCTISPAPRHSPALTVPLMNPGGQFHPTPPPLQ</original>
    <variation>SCIIHLKSMGVASRHEYFSGTLQMPAHPVRNSTLENLWVDCSRSLRSTVLPFP</variation>
    <location>
        <begin position="240"/>
        <end position="292"/>
    </location>
</feature>
<feature type="splice variant" id="VSP_008124" description="In isoform 3." evidence="21">
    <location>
        <begin position="293"/>
        <end position="604"/>
    </location>
</feature>
<feature type="sequence conflict" description="In Ref. 7; AAH15066." evidence="23" ref="7">
    <original>P</original>
    <variation>H</variation>
    <location>
        <position position="31"/>
    </location>
</feature>
<feature type="sequence conflict" description="In Ref. 4; AK307887." evidence="23" ref="4">
    <original>A</original>
    <variation>V</variation>
    <location>
        <position position="266"/>
    </location>
</feature>
<keyword id="KW-0025">Alternative splicing</keyword>
<keyword id="KW-0175">Coiled coil</keyword>
<keyword id="KW-1017">Isopeptide bond</keyword>
<keyword id="KW-0479">Metal-binding</keyword>
<keyword id="KW-0539">Nucleus</keyword>
<keyword id="KW-0597">Phosphoprotein</keyword>
<keyword id="KW-1267">Proteomics identification</keyword>
<keyword id="KW-1185">Reference proteome</keyword>
<keyword id="KW-0678">Repressor</keyword>
<keyword id="KW-0804">Transcription</keyword>
<keyword id="KW-0805">Transcription regulation</keyword>
<keyword id="KW-0832">Ubl conjugation</keyword>
<keyword id="KW-0862">Zinc</keyword>
<keyword id="KW-0863">Zinc-finger</keyword>
<gene>
    <name type="primary">CBFA2T2</name>
    <name type="synonym">EHT</name>
    <name type="synonym">MTGR1</name>
</gene>
<organism>
    <name type="scientific">Homo sapiens</name>
    <name type="common">Human</name>
    <dbReference type="NCBI Taxonomy" id="9606"/>
    <lineage>
        <taxon>Eukaryota</taxon>
        <taxon>Metazoa</taxon>
        <taxon>Chordata</taxon>
        <taxon>Craniata</taxon>
        <taxon>Vertebrata</taxon>
        <taxon>Euteleostomi</taxon>
        <taxon>Mammalia</taxon>
        <taxon>Eutheria</taxon>
        <taxon>Euarchontoglires</taxon>
        <taxon>Primates</taxon>
        <taxon>Haplorrhini</taxon>
        <taxon>Catarrhini</taxon>
        <taxon>Hominidae</taxon>
        <taxon>Homo</taxon>
    </lineage>
</organism>
<proteinExistence type="evidence at protein level"/>